<protein>
    <recommendedName>
        <fullName>Leucine-rich repeat-containing protein 59</fullName>
    </recommendedName>
    <component>
        <recommendedName>
            <fullName>Leucine-rich repeat-containing protein 59, N-terminally processed</fullName>
        </recommendedName>
    </component>
</protein>
<keyword id="KW-0007">Acetylation</keyword>
<keyword id="KW-0175">Coiled coil</keyword>
<keyword id="KW-0256">Endoplasmic reticulum</keyword>
<keyword id="KW-0433">Leucine-rich repeat</keyword>
<keyword id="KW-0472">Membrane</keyword>
<keyword id="KW-0492">Microsome</keyword>
<keyword id="KW-0539">Nucleus</keyword>
<keyword id="KW-0597">Phosphoprotein</keyword>
<keyword id="KW-1185">Reference proteome</keyword>
<keyword id="KW-0677">Repeat</keyword>
<keyword id="KW-0735">Signal-anchor</keyword>
<keyword id="KW-0812">Transmembrane</keyword>
<keyword id="KW-1133">Transmembrane helix</keyword>
<organism>
    <name type="scientific">Bos taurus</name>
    <name type="common">Bovine</name>
    <dbReference type="NCBI Taxonomy" id="9913"/>
    <lineage>
        <taxon>Eukaryota</taxon>
        <taxon>Metazoa</taxon>
        <taxon>Chordata</taxon>
        <taxon>Craniata</taxon>
        <taxon>Vertebrata</taxon>
        <taxon>Euteleostomi</taxon>
        <taxon>Mammalia</taxon>
        <taxon>Eutheria</taxon>
        <taxon>Laurasiatheria</taxon>
        <taxon>Artiodactyla</taxon>
        <taxon>Ruminantia</taxon>
        <taxon>Pecora</taxon>
        <taxon>Bovidae</taxon>
        <taxon>Bovinae</taxon>
        <taxon>Bos</taxon>
    </lineage>
</organism>
<proteinExistence type="evidence at transcript level"/>
<feature type="chain" id="PRO_0000235158" description="Leucine-rich repeat-containing protein 59">
    <location>
        <begin position="1"/>
        <end position="306"/>
    </location>
</feature>
<feature type="initiator methionine" description="Removed; alternate" evidence="3">
    <location>
        <position position="1"/>
    </location>
</feature>
<feature type="chain" id="PRO_0000441738" description="Leucine-rich repeat-containing protein 59, N-terminally processed">
    <location>
        <begin position="2"/>
        <end position="306"/>
    </location>
</feature>
<feature type="topological domain" description="Cytoplasmic" evidence="4">
    <location>
        <begin position="2"/>
        <end position="244"/>
    </location>
</feature>
<feature type="transmembrane region" description="Helical" evidence="4">
    <location>
        <begin position="245"/>
        <end position="265"/>
    </location>
</feature>
<feature type="topological domain" description="Lumenal" evidence="4">
    <location>
        <begin position="266"/>
        <end position="306"/>
    </location>
</feature>
<feature type="repeat" description="LRR 1">
    <location>
        <begin position="10"/>
        <end position="31"/>
    </location>
</feature>
<feature type="repeat" description="LRR 2">
    <location>
        <begin position="40"/>
        <end position="62"/>
    </location>
</feature>
<feature type="repeat" description="LRR 3">
    <location>
        <begin position="63"/>
        <end position="84"/>
    </location>
</feature>
<feature type="repeat" description="LRR 4">
    <location>
        <begin position="86"/>
        <end position="107"/>
    </location>
</feature>
<feature type="repeat" description="LRR 5">
    <location>
        <begin position="109"/>
        <end position="128"/>
    </location>
</feature>
<feature type="region of interest" description="Disordered" evidence="5">
    <location>
        <begin position="175"/>
        <end position="241"/>
    </location>
</feature>
<feature type="coiled-coil region" evidence="4">
    <location>
        <begin position="152"/>
        <end position="216"/>
    </location>
</feature>
<feature type="compositionally biased region" description="Basic and acidic residues" evidence="5">
    <location>
        <begin position="175"/>
        <end position="221"/>
    </location>
</feature>
<feature type="compositionally biased region" description="Basic residues" evidence="5">
    <location>
        <begin position="229"/>
        <end position="241"/>
    </location>
</feature>
<feature type="modified residue" description="N-acetylmethionine" evidence="3">
    <location>
        <position position="1"/>
    </location>
</feature>
<feature type="modified residue" description="N-acetylthreonine; in Leucine-rich repeat-containing protein 59, N-terminally processed" evidence="3">
    <location>
        <position position="2"/>
    </location>
</feature>
<feature type="modified residue" description="Phosphoserine" evidence="3">
    <location>
        <position position="23"/>
    </location>
</feature>
<feature type="modified residue" description="Phosphoserine" evidence="3">
    <location>
        <position position="25"/>
    </location>
</feature>
<feature type="modified residue" description="N6-succinyllysine" evidence="2">
    <location>
        <position position="73"/>
    </location>
</feature>
<feature type="modified residue" description="N6-acetyllysine" evidence="2">
    <location>
        <position position="135"/>
    </location>
</feature>
<evidence type="ECO:0000250" key="1"/>
<evidence type="ECO:0000250" key="2">
    <source>
        <dbReference type="UniProtKB" id="Q922Q8"/>
    </source>
</evidence>
<evidence type="ECO:0000250" key="3">
    <source>
        <dbReference type="UniProtKB" id="Q96AG4"/>
    </source>
</evidence>
<evidence type="ECO:0000255" key="4"/>
<evidence type="ECO:0000256" key="5">
    <source>
        <dbReference type="SAM" id="MobiDB-lite"/>
    </source>
</evidence>
<comment type="function">
    <text evidence="1">Required for nuclear import of FGF1, but not that of FGF2. Might regulate nuclear import of exogenous FGF1 by facilitating interaction with the nuclear import machinery and by transporting cytosolic FGF1 to, and possibly through, the nuclear pores (By similarity).</text>
</comment>
<comment type="subunit">
    <text evidence="1">Can form homodimers. Interacts with SGO1. Interacts with FGF1.</text>
</comment>
<comment type="subcellular location">
    <subcellularLocation>
        <location evidence="1">Microsome membrane</location>
        <topology evidence="1">Single-pass type II membrane protein</topology>
    </subcellularLocation>
    <subcellularLocation>
        <location evidence="1">Endoplasmic reticulum membrane</location>
        <topology evidence="1">Single-pass type II membrane protein</topology>
    </subcellularLocation>
    <subcellularLocation>
        <location evidence="1">Nucleus envelope</location>
    </subcellularLocation>
    <text evidence="1">Localization in the nuclear envelope depends upon the nuclear import machinery, including KPNB1.</text>
</comment>
<sequence>MTKAGSKGGNLRDKLDGNELDLSLSDLNEVPVKELAALPKATVLDLSCNKLTTLPSDFCGLTHLVKLDLSKNKLRQLPADFGRLVNLQHLDLLNNRLVTLPVSFAQLKSLKWLDLKDNPLDPVLAKVAGDCLDEKQCKQCANKVLQHMKAVQADQERERQRRLEIDREAEKKWEAKQRAKEAQERELRKREKAEEKERRRKEYDALKAAKREQEKKPKKETNQAPKSKSSSRPRKPPPRKHTRSWAVLKLLLLLLLCVAGGLVACRVTELQQQPLCTSVNTIYDNAVRGLRSHDILQWVLQTDSQQ</sequence>
<name>LRC59_BOVIN</name>
<accession>Q5E9X4</accession>
<accession>Q17QQ7</accession>
<reference key="1">
    <citation type="journal article" date="2005" name="BMC Genomics">
        <title>Characterization of 954 bovine full-CDS cDNA sequences.</title>
        <authorList>
            <person name="Harhay G.P."/>
            <person name="Sonstegard T.S."/>
            <person name="Keele J.W."/>
            <person name="Heaton M.P."/>
            <person name="Clawson M.L."/>
            <person name="Snelling W.M."/>
            <person name="Wiedmann R.T."/>
            <person name="Van Tassell C.P."/>
            <person name="Smith T.P.L."/>
        </authorList>
    </citation>
    <scope>NUCLEOTIDE SEQUENCE [LARGE SCALE MRNA]</scope>
</reference>
<reference key="2">
    <citation type="submission" date="2006-06" db="EMBL/GenBank/DDBJ databases">
        <authorList>
            <consortium name="NIH - Mammalian Gene Collection (MGC) project"/>
        </authorList>
    </citation>
    <scope>NUCLEOTIDE SEQUENCE [LARGE SCALE MRNA]</scope>
    <source>
        <strain>Hereford</strain>
        <tissue>Hippocampus</tissue>
    </source>
</reference>
<gene>
    <name type="primary">LRRC59</name>
</gene>
<dbReference type="EMBL" id="BT020796">
    <property type="protein sequence ID" value="AAX08813.1"/>
    <property type="molecule type" value="mRNA"/>
</dbReference>
<dbReference type="EMBL" id="BC118231">
    <property type="protein sequence ID" value="AAI18232.1"/>
    <property type="molecule type" value="mRNA"/>
</dbReference>
<dbReference type="RefSeq" id="NP_001029750.1">
    <property type="nucleotide sequence ID" value="NM_001034578.1"/>
</dbReference>
<dbReference type="SMR" id="Q5E9X4"/>
<dbReference type="FunCoup" id="Q5E9X4">
    <property type="interactions" value="1445"/>
</dbReference>
<dbReference type="IntAct" id="Q5E9X4">
    <property type="interactions" value="1"/>
</dbReference>
<dbReference type="STRING" id="9913.ENSBTAP00000007978"/>
<dbReference type="PaxDb" id="9913-ENSBTAP00000007978"/>
<dbReference type="PeptideAtlas" id="Q5E9X4"/>
<dbReference type="Ensembl" id="ENSBTAT00000007978.7">
    <property type="protein sequence ID" value="ENSBTAP00000007978.5"/>
    <property type="gene ID" value="ENSBTAG00000006072.7"/>
</dbReference>
<dbReference type="GeneID" id="532659"/>
<dbReference type="KEGG" id="bta:532659"/>
<dbReference type="CTD" id="55379"/>
<dbReference type="VEuPathDB" id="HostDB:ENSBTAG00000006072"/>
<dbReference type="VGNC" id="VGNC:55843">
    <property type="gene designation" value="LRRC59"/>
</dbReference>
<dbReference type="eggNOG" id="KOG0473">
    <property type="taxonomic scope" value="Eukaryota"/>
</dbReference>
<dbReference type="GeneTree" id="ENSGT00390000017385"/>
<dbReference type="HOGENOM" id="CLU_062247_1_0_1"/>
<dbReference type="InParanoid" id="Q5E9X4"/>
<dbReference type="OMA" id="CASVNTI"/>
<dbReference type="OrthoDB" id="1394818at2759"/>
<dbReference type="TreeFam" id="TF316929"/>
<dbReference type="CD-CODE" id="D7FE2080">
    <property type="entry name" value="Nucleolus"/>
</dbReference>
<dbReference type="Proteomes" id="UP000009136">
    <property type="component" value="Chromosome 19"/>
</dbReference>
<dbReference type="Bgee" id="ENSBTAG00000006072">
    <property type="expression patterns" value="Expressed in saliva-secreting gland and 108 other cell types or tissues"/>
</dbReference>
<dbReference type="GO" id="GO:0005789">
    <property type="term" value="C:endoplasmic reticulum membrane"/>
    <property type="evidence" value="ECO:0007669"/>
    <property type="project" value="UniProtKB-SubCell"/>
</dbReference>
<dbReference type="GO" id="GO:0042645">
    <property type="term" value="C:mitochondrial nucleoid"/>
    <property type="evidence" value="ECO:0007669"/>
    <property type="project" value="Ensembl"/>
</dbReference>
<dbReference type="GO" id="GO:0005635">
    <property type="term" value="C:nuclear envelope"/>
    <property type="evidence" value="ECO:0007669"/>
    <property type="project" value="UniProtKB-SubCell"/>
</dbReference>
<dbReference type="FunFam" id="3.80.10.10:FF:000141">
    <property type="entry name" value="Leucine-rich repeat-containing protein 59"/>
    <property type="match status" value="1"/>
</dbReference>
<dbReference type="Gene3D" id="3.80.10.10">
    <property type="entry name" value="Ribonuclease Inhibitor"/>
    <property type="match status" value="1"/>
</dbReference>
<dbReference type="InterPro" id="IPR001611">
    <property type="entry name" value="Leu-rich_rpt"/>
</dbReference>
<dbReference type="InterPro" id="IPR003591">
    <property type="entry name" value="Leu-rich_rpt_typical-subtyp"/>
</dbReference>
<dbReference type="InterPro" id="IPR032675">
    <property type="entry name" value="LRR_dom_sf"/>
</dbReference>
<dbReference type="InterPro" id="IPR050216">
    <property type="entry name" value="LRR_domain-containing"/>
</dbReference>
<dbReference type="PANTHER" id="PTHR48051">
    <property type="match status" value="1"/>
</dbReference>
<dbReference type="PANTHER" id="PTHR48051:SF42">
    <property type="entry name" value="LEUCINE-RICH REPEAT-CONTAINING PROTEIN 18-LIKE"/>
    <property type="match status" value="1"/>
</dbReference>
<dbReference type="Pfam" id="PF00560">
    <property type="entry name" value="LRR_1"/>
    <property type="match status" value="1"/>
</dbReference>
<dbReference type="Pfam" id="PF13855">
    <property type="entry name" value="LRR_8"/>
    <property type="match status" value="1"/>
</dbReference>
<dbReference type="PRINTS" id="PR00019">
    <property type="entry name" value="LEURICHRPT"/>
</dbReference>
<dbReference type="SMART" id="SM00369">
    <property type="entry name" value="LRR_TYP"/>
    <property type="match status" value="4"/>
</dbReference>
<dbReference type="SUPFAM" id="SSF52058">
    <property type="entry name" value="L domain-like"/>
    <property type="match status" value="1"/>
</dbReference>
<dbReference type="PROSITE" id="PS51450">
    <property type="entry name" value="LRR"/>
    <property type="match status" value="4"/>
</dbReference>